<dbReference type="EC" id="2.3.1.21" evidence="6"/>
<dbReference type="EMBL" id="D87812">
    <property type="protein sequence ID" value="BAA13461.1"/>
    <property type="molecule type" value="mRNA"/>
</dbReference>
<dbReference type="EMBL" id="U66828">
    <property type="protein sequence ID" value="AAB40651.1"/>
    <property type="molecule type" value="mRNA"/>
</dbReference>
<dbReference type="EMBL" id="U62733">
    <property type="protein sequence ID" value="AAC51122.1"/>
    <property type="molecule type" value="mRNA"/>
</dbReference>
<dbReference type="EMBL" id="Y08682">
    <property type="protein sequence ID" value="CAA69938.1"/>
    <property type="molecule type" value="mRNA"/>
</dbReference>
<dbReference type="EMBL" id="Y08683">
    <property type="protein sequence ID" value="CAA69939.1"/>
    <property type="molecule type" value="mRNA"/>
</dbReference>
<dbReference type="EMBL" id="AB003286">
    <property type="protein sequence ID" value="BAA21492.1"/>
    <property type="molecule type" value="Genomic_DNA"/>
</dbReference>
<dbReference type="EMBL" id="AB051457">
    <property type="protein sequence ID" value="BAB33340.1"/>
    <property type="status" value="ALT_INIT"/>
    <property type="molecule type" value="mRNA"/>
</dbReference>
<dbReference type="EMBL" id="AK297866">
    <property type="protein sequence ID" value="BAH12680.1"/>
    <property type="molecule type" value="mRNA"/>
</dbReference>
<dbReference type="EMBL" id="AK299395">
    <property type="protein sequence ID" value="BAH13024.1"/>
    <property type="molecule type" value="mRNA"/>
</dbReference>
<dbReference type="EMBL" id="U62317">
    <property type="protein sequence ID" value="AAB03343.1"/>
    <property type="molecule type" value="Genomic_DNA"/>
</dbReference>
<dbReference type="CCDS" id="CCDS14098.1">
    <molecule id="Q92523-1"/>
</dbReference>
<dbReference type="CCDS" id="CCDS46734.1">
    <molecule id="Q92523-3"/>
</dbReference>
<dbReference type="PIR" id="G02860">
    <property type="entry name" value="G02860"/>
</dbReference>
<dbReference type="RefSeq" id="NP_001138606.1">
    <molecule id="Q92523-3"/>
    <property type="nucleotide sequence ID" value="NM_001145134.2"/>
</dbReference>
<dbReference type="RefSeq" id="NP_001138607.1">
    <molecule id="Q92523-1"/>
    <property type="nucleotide sequence ID" value="NM_001145135.2"/>
</dbReference>
<dbReference type="RefSeq" id="NP_001138609.1">
    <molecule id="Q92523-1"/>
    <property type="nucleotide sequence ID" value="NM_001145137.2"/>
</dbReference>
<dbReference type="RefSeq" id="NP_004368.1">
    <molecule id="Q92523-1"/>
    <property type="nucleotide sequence ID" value="NM_004377.4"/>
</dbReference>
<dbReference type="RefSeq" id="NP_689451.1">
    <molecule id="Q92523-1"/>
    <property type="nucleotide sequence ID" value="NM_152245.3"/>
</dbReference>
<dbReference type="RefSeq" id="NP_689452.1">
    <molecule id="Q92523-1"/>
    <property type="nucleotide sequence ID" value="NM_152246.3"/>
</dbReference>
<dbReference type="SMR" id="Q92523"/>
<dbReference type="BioGRID" id="107766">
    <property type="interactions" value="4"/>
</dbReference>
<dbReference type="FunCoup" id="Q92523">
    <property type="interactions" value="667"/>
</dbReference>
<dbReference type="IntAct" id="Q92523">
    <property type="interactions" value="4"/>
</dbReference>
<dbReference type="STRING" id="9606.ENSP00000379011"/>
<dbReference type="BindingDB" id="Q92523"/>
<dbReference type="ChEMBL" id="CHEMBL2216739"/>
<dbReference type="DrugBank" id="DB00583">
    <property type="generic name" value="Levocarnitine"/>
</dbReference>
<dbReference type="DrugBank" id="DB01074">
    <property type="generic name" value="Perhexiline"/>
</dbReference>
<dbReference type="SwissLipids" id="SLP:000001052"/>
<dbReference type="iPTMnet" id="Q92523"/>
<dbReference type="PhosphoSitePlus" id="Q92523"/>
<dbReference type="BioMuta" id="CPT1B"/>
<dbReference type="DMDM" id="2493497"/>
<dbReference type="jPOST" id="Q92523"/>
<dbReference type="MassIVE" id="Q92523"/>
<dbReference type="PaxDb" id="9606-ENSP00000379011"/>
<dbReference type="PeptideAtlas" id="Q92523"/>
<dbReference type="ProteomicsDB" id="19483"/>
<dbReference type="ProteomicsDB" id="75282">
    <molecule id="Q92523-1"/>
</dbReference>
<dbReference type="ProteomicsDB" id="75283">
    <molecule id="Q92523-2"/>
</dbReference>
<dbReference type="ProteomicsDB" id="75284">
    <molecule id="Q92523-3"/>
</dbReference>
<dbReference type="Antibodypedia" id="28758">
    <property type="antibodies" value="415 antibodies from 34 providers"/>
</dbReference>
<dbReference type="DNASU" id="1375"/>
<dbReference type="Ensembl" id="ENST00000312108.12">
    <molecule id="Q92523-1"/>
    <property type="protein sequence ID" value="ENSP00000312189.8"/>
    <property type="gene ID" value="ENSG00000205560.14"/>
</dbReference>
<dbReference type="Ensembl" id="ENST00000395650.6">
    <molecule id="Q92523-1"/>
    <property type="protein sequence ID" value="ENSP00000379011.2"/>
    <property type="gene ID" value="ENSG00000205560.14"/>
</dbReference>
<dbReference type="Ensembl" id="ENST00000405237.7">
    <molecule id="Q92523-1"/>
    <property type="protein sequence ID" value="ENSP00000385486.3"/>
    <property type="gene ID" value="ENSG00000205560.14"/>
</dbReference>
<dbReference type="Ensembl" id="ENST00000457250.5">
    <molecule id="Q92523-3"/>
    <property type="protein sequence ID" value="ENSP00000409342.1"/>
    <property type="gene ID" value="ENSG00000205560.14"/>
</dbReference>
<dbReference type="GeneID" id="1375"/>
<dbReference type="KEGG" id="hsa:1375"/>
<dbReference type="MANE-Select" id="ENST00000312108.12">
    <property type="protein sequence ID" value="ENSP00000312189.8"/>
    <property type="RefSeq nucleotide sequence ID" value="NM_152246.3"/>
    <property type="RefSeq protein sequence ID" value="NP_689452.1"/>
</dbReference>
<dbReference type="UCSC" id="uc003bmk.5">
    <molecule id="Q92523-1"/>
    <property type="organism name" value="human"/>
</dbReference>
<dbReference type="AGR" id="HGNC:2329"/>
<dbReference type="CTD" id="1375"/>
<dbReference type="DisGeNET" id="1375"/>
<dbReference type="GeneCards" id="CPT1B"/>
<dbReference type="HGNC" id="HGNC:2329">
    <property type="gene designation" value="CPT1B"/>
</dbReference>
<dbReference type="HPA" id="ENSG00000205560">
    <property type="expression patterns" value="Group enriched (heart muscle, skeletal muscle, testis, tongue)"/>
</dbReference>
<dbReference type="MalaCards" id="CPT1B"/>
<dbReference type="MIM" id="601987">
    <property type="type" value="gene"/>
</dbReference>
<dbReference type="neXtProt" id="NX_Q92523"/>
<dbReference type="OpenTargets" id="ENSG00000205560"/>
<dbReference type="PharmGKB" id="PA26848"/>
<dbReference type="VEuPathDB" id="HostDB:ENSG00000205560"/>
<dbReference type="eggNOG" id="KOG3716">
    <property type="taxonomic scope" value="Eukaryota"/>
</dbReference>
<dbReference type="GeneTree" id="ENSGT01130000278324"/>
<dbReference type="HOGENOM" id="CLU_013513_2_1_1"/>
<dbReference type="InParanoid" id="Q92523"/>
<dbReference type="OMA" id="YSETGHC"/>
<dbReference type="OrthoDB" id="240216at2759"/>
<dbReference type="PAN-GO" id="Q92523">
    <property type="GO annotations" value="5 GO annotations based on evolutionary models"/>
</dbReference>
<dbReference type="PhylomeDB" id="Q92523"/>
<dbReference type="TreeFam" id="TF313836"/>
<dbReference type="BioCyc" id="MetaCyc:MONOMER66-34409"/>
<dbReference type="BRENDA" id="2.3.1.21">
    <property type="organism ID" value="2681"/>
</dbReference>
<dbReference type="PathwayCommons" id="Q92523"/>
<dbReference type="Reactome" id="R-HSA-200425">
    <property type="pathway name" value="Carnitine shuttle"/>
</dbReference>
<dbReference type="SABIO-RK" id="Q92523"/>
<dbReference type="SignaLink" id="Q92523"/>
<dbReference type="SIGNOR" id="Q92523"/>
<dbReference type="UniPathway" id="UPA00659"/>
<dbReference type="BioGRID-ORCS" id="1375">
    <property type="hits" value="15 hits in 1154 CRISPR screens"/>
</dbReference>
<dbReference type="GenomeRNAi" id="1375"/>
<dbReference type="Pharos" id="Q92523">
    <property type="development level" value="Tchem"/>
</dbReference>
<dbReference type="PRO" id="PR:Q92523"/>
<dbReference type="Proteomes" id="UP000005640">
    <property type="component" value="Chromosome 22"/>
</dbReference>
<dbReference type="RNAct" id="Q92523">
    <property type="molecule type" value="protein"/>
</dbReference>
<dbReference type="Bgee" id="ENSG00000205560">
    <property type="expression patterns" value="Expressed in apex of heart and 96 other cell types or tissues"/>
</dbReference>
<dbReference type="ExpressionAtlas" id="Q92523">
    <property type="expression patterns" value="baseline and differential"/>
</dbReference>
<dbReference type="GO" id="GO:0005758">
    <property type="term" value="C:mitochondrial intermembrane space"/>
    <property type="evidence" value="ECO:0007669"/>
    <property type="project" value="Ensembl"/>
</dbReference>
<dbReference type="GO" id="GO:0005741">
    <property type="term" value="C:mitochondrial outer membrane"/>
    <property type="evidence" value="ECO:0000304"/>
    <property type="project" value="Reactome"/>
</dbReference>
<dbReference type="GO" id="GO:0005739">
    <property type="term" value="C:mitochondrion"/>
    <property type="evidence" value="ECO:0000314"/>
    <property type="project" value="UniProtKB"/>
</dbReference>
<dbReference type="GO" id="GO:0004095">
    <property type="term" value="F:carnitine O-palmitoyltransferase activity"/>
    <property type="evidence" value="ECO:0000315"/>
    <property type="project" value="UniProtKB"/>
</dbReference>
<dbReference type="GO" id="GO:0009437">
    <property type="term" value="P:carnitine metabolic process"/>
    <property type="evidence" value="ECO:0000250"/>
    <property type="project" value="UniProtKB"/>
</dbReference>
<dbReference type="GO" id="GO:0006853">
    <property type="term" value="P:carnitine shuttle"/>
    <property type="evidence" value="ECO:0000304"/>
    <property type="project" value="Reactome"/>
</dbReference>
<dbReference type="GO" id="GO:0006635">
    <property type="term" value="P:fatty acid beta-oxidation"/>
    <property type="evidence" value="ECO:0000304"/>
    <property type="project" value="ProtInc"/>
</dbReference>
<dbReference type="GO" id="GO:0006631">
    <property type="term" value="P:fatty acid metabolic process"/>
    <property type="evidence" value="ECO:0000250"/>
    <property type="project" value="UniProtKB"/>
</dbReference>
<dbReference type="GO" id="GO:0015909">
    <property type="term" value="P:long-chain fatty acid transport"/>
    <property type="evidence" value="ECO:0000318"/>
    <property type="project" value="GO_Central"/>
</dbReference>
<dbReference type="GO" id="GO:0009637">
    <property type="term" value="P:response to blue light"/>
    <property type="evidence" value="ECO:0000250"/>
    <property type="project" value="UniProtKB"/>
</dbReference>
<dbReference type="FunFam" id="3.30.559.70:FF:000001">
    <property type="entry name" value="Carnitine O-palmitoyltransferase 1, liver isoform"/>
    <property type="match status" value="1"/>
</dbReference>
<dbReference type="FunFam" id="3.30.559.10:FF:000002">
    <property type="entry name" value="carnitine O-palmitoyltransferase 1, liver isoform"/>
    <property type="match status" value="1"/>
</dbReference>
<dbReference type="Gene3D" id="6.10.250.1760">
    <property type="match status" value="1"/>
</dbReference>
<dbReference type="Gene3D" id="3.30.559.10">
    <property type="entry name" value="Chloramphenicol acetyltransferase-like domain"/>
    <property type="match status" value="1"/>
</dbReference>
<dbReference type="Gene3D" id="3.30.559.70">
    <property type="entry name" value="Choline/Carnitine o-acyltransferase, domain 2"/>
    <property type="match status" value="1"/>
</dbReference>
<dbReference type="InterPro" id="IPR000542">
    <property type="entry name" value="Carn_acyl_trans"/>
</dbReference>
<dbReference type="InterPro" id="IPR023213">
    <property type="entry name" value="CAT-like_dom_sf"/>
</dbReference>
<dbReference type="InterPro" id="IPR039551">
    <property type="entry name" value="Cho/carn_acyl_trans"/>
</dbReference>
<dbReference type="InterPro" id="IPR042231">
    <property type="entry name" value="Cho/carn_acyl_trans_2"/>
</dbReference>
<dbReference type="InterPro" id="IPR032476">
    <property type="entry name" value="CPT_N"/>
</dbReference>
<dbReference type="PANTHER" id="PTHR22589">
    <property type="entry name" value="CARNITINE O-ACYLTRANSFERASE"/>
    <property type="match status" value="1"/>
</dbReference>
<dbReference type="PANTHER" id="PTHR22589:SF69">
    <property type="entry name" value="CARNITINE O-PALMITOYLTRANSFERASE 1, MUSCLE ISOFORM"/>
    <property type="match status" value="1"/>
</dbReference>
<dbReference type="Pfam" id="PF00755">
    <property type="entry name" value="Carn_acyltransf"/>
    <property type="match status" value="1"/>
</dbReference>
<dbReference type="Pfam" id="PF16484">
    <property type="entry name" value="CPT_N"/>
    <property type="match status" value="1"/>
</dbReference>
<dbReference type="SUPFAM" id="SSF52777">
    <property type="entry name" value="CoA-dependent acyltransferases"/>
    <property type="match status" value="2"/>
</dbReference>
<dbReference type="PROSITE" id="PS00439">
    <property type="entry name" value="ACYLTRANSF_C_1"/>
    <property type="match status" value="1"/>
</dbReference>
<dbReference type="PROSITE" id="PS00440">
    <property type="entry name" value="ACYLTRANSF_C_2"/>
    <property type="match status" value="1"/>
</dbReference>
<evidence type="ECO:0000250" key="1">
    <source>
        <dbReference type="UniProtKB" id="P18886"/>
    </source>
</evidence>
<evidence type="ECO:0000250" key="2">
    <source>
        <dbReference type="UniProtKB" id="Q63704"/>
    </source>
</evidence>
<evidence type="ECO:0000255" key="3"/>
<evidence type="ECO:0000269" key="4">
    <source>
    </source>
</evidence>
<evidence type="ECO:0000269" key="5">
    <source>
    </source>
</evidence>
<evidence type="ECO:0000269" key="6">
    <source>
    </source>
</evidence>
<evidence type="ECO:0000303" key="7">
    <source>
    </source>
</evidence>
<evidence type="ECO:0000303" key="8">
    <source>
    </source>
</evidence>
<evidence type="ECO:0000305" key="9"/>
<evidence type="ECO:0000305" key="10">
    <source>
    </source>
</evidence>
<keyword id="KW-0012">Acyltransferase</keyword>
<keyword id="KW-0025">Alternative splicing</keyword>
<keyword id="KW-0276">Fatty acid metabolism</keyword>
<keyword id="KW-0443">Lipid metabolism</keyword>
<keyword id="KW-0472">Membrane</keyword>
<keyword id="KW-0496">Mitochondrion</keyword>
<keyword id="KW-1000">Mitochondrion outer membrane</keyword>
<keyword id="KW-1267">Proteomics identification</keyword>
<keyword id="KW-1185">Reference proteome</keyword>
<keyword id="KW-0808">Transferase</keyword>
<keyword id="KW-0812">Transmembrane</keyword>
<keyword id="KW-1133">Transmembrane helix</keyword>
<keyword id="KW-0813">Transport</keyword>
<accession>Q92523</accession>
<accession>B7Z4U4</accession>
<accession>B7Z5T8</accession>
<accession>E9PCP2</accession>
<accession>Q13389</accession>
<accession>Q99655</accession>
<accession>Q9BY90</accession>
<name>CPT1B_HUMAN</name>
<reference key="1">
    <citation type="journal article" date="1996" name="Biochim. Biophys. Acta">
        <title>Isolation and characterization of cDNA and genomic clones encoding human muscle type carnitine palmitoyltransferase I.</title>
        <authorList>
            <person name="Yamazaki N."/>
            <person name="Shinohara Y."/>
            <person name="Shima A."/>
            <person name="Yamanaka Y."/>
            <person name="Terada H."/>
        </authorList>
    </citation>
    <scope>NUCLEOTIDE SEQUENCE [MRNA] (ISOFORM 1)</scope>
    <source>
        <tissue>Heart</tissue>
    </source>
</reference>
<reference key="2">
    <citation type="journal article" date="1997" name="Arch. Biochem. Biophys.">
        <title>Functional studies of yeast-expressed human heart muscle carnitine palmitoyltransferase I.</title>
        <authorList>
            <person name="Zhu H."/>
            <person name="Shi J."/>
            <person name="de Vries Y."/>
            <person name="Arvidson D.N."/>
            <person name="Cregg J.M."/>
            <person name="Woldegiorgis G."/>
        </authorList>
    </citation>
    <scope>NUCLEOTIDE SEQUENCE [MRNA] (ISOFORM 1)</scope>
    <scope>FUNCTION</scope>
    <scope>CATALYTIC ACTIVITY</scope>
    <scope>SUBCELLULAR LOCATION</scope>
    <scope>BIOPHYSICOCHEMICAL PROPERTIES</scope>
</reference>
<reference key="3">
    <citation type="journal article" date="1997" name="Genomics">
        <title>Fine chromosome mapping of the genes for human liver and muscle carnitine palmitoyltransferase I (CPT1A and CPT1B).</title>
        <authorList>
            <person name="Britton C.H."/>
            <person name="Mackey D.W."/>
            <person name="Esser V."/>
            <person name="Foster D.W."/>
            <person name="Burns D.K."/>
            <person name="Yarnall D.P."/>
            <person name="Froguel P."/>
            <person name="McGarry J.D."/>
        </authorList>
    </citation>
    <scope>NUCLEOTIDE SEQUENCE [MRNA] (ISOFORM 1)</scope>
    <source>
        <tissue>Heart</tissue>
    </source>
</reference>
<reference key="4">
    <citation type="journal article" date="1997" name="Biochim. Biophys. Acta">
        <title>Localization and intron usage analysis of the human CPT1B gene for muscle type carnitine palmitoyltransferase I.</title>
        <authorList>
            <person name="van der Leij F.R."/>
            <person name="Takens J."/>
            <person name="van der Veen A.Y."/>
            <person name="Terpstra P."/>
            <person name="Kuipers J.R.G."/>
        </authorList>
    </citation>
    <scope>NUCLEOTIDE SEQUENCE [MRNA] (ISOFORM 1)</scope>
    <source>
        <tissue>Skeletal muscle</tissue>
    </source>
</reference>
<reference key="5">
    <citation type="journal article" date="1997" name="FEBS Lett.">
        <title>Structural features of the gene encoding human muscle type carnitine palmitoyltransferase I.</title>
        <authorList>
            <person name="Yamazaki N."/>
            <person name="Yamanaka Y."/>
            <person name="Hashimoto Y."/>
            <person name="Shinohara Y."/>
            <person name="Shima A."/>
            <person name="Terada H."/>
        </authorList>
    </citation>
    <scope>NUCLEOTIDE SEQUENCE [GENOMIC DNA] (ISOFORM 1)</scope>
</reference>
<reference key="6">
    <citation type="journal article" date="2001" name="DNA Res.">
        <title>Identification of novel transcribed sequences on human chromosome 22 by expressed sequence tag mapping.</title>
        <authorList>
            <person name="Hirosawa M."/>
            <person name="Nagase T."/>
            <person name="Murahashi Y."/>
            <person name="Kikuno R."/>
            <person name="Ohara O."/>
        </authorList>
    </citation>
    <scope>NUCLEOTIDE SEQUENCE [LARGE SCALE MRNA] (ISOFORM 2)</scope>
    <scope>VARIANT LYS-531</scope>
</reference>
<reference key="7">
    <citation type="journal article" date="2004" name="Nat. Genet.">
        <title>Complete sequencing and characterization of 21,243 full-length human cDNAs.</title>
        <authorList>
            <person name="Ota T."/>
            <person name="Suzuki Y."/>
            <person name="Nishikawa T."/>
            <person name="Otsuki T."/>
            <person name="Sugiyama T."/>
            <person name="Irie R."/>
            <person name="Wakamatsu A."/>
            <person name="Hayashi K."/>
            <person name="Sato H."/>
            <person name="Nagai K."/>
            <person name="Kimura K."/>
            <person name="Makita H."/>
            <person name="Sekine M."/>
            <person name="Obayashi M."/>
            <person name="Nishi T."/>
            <person name="Shibahara T."/>
            <person name="Tanaka T."/>
            <person name="Ishii S."/>
            <person name="Yamamoto J."/>
            <person name="Saito K."/>
            <person name="Kawai Y."/>
            <person name="Isono Y."/>
            <person name="Nakamura Y."/>
            <person name="Nagahari K."/>
            <person name="Murakami K."/>
            <person name="Yasuda T."/>
            <person name="Iwayanagi T."/>
            <person name="Wagatsuma M."/>
            <person name="Shiratori A."/>
            <person name="Sudo H."/>
            <person name="Hosoiri T."/>
            <person name="Kaku Y."/>
            <person name="Kodaira H."/>
            <person name="Kondo H."/>
            <person name="Sugawara M."/>
            <person name="Takahashi M."/>
            <person name="Kanda K."/>
            <person name="Yokoi T."/>
            <person name="Furuya T."/>
            <person name="Kikkawa E."/>
            <person name="Omura Y."/>
            <person name="Abe K."/>
            <person name="Kamihara K."/>
            <person name="Katsuta N."/>
            <person name="Sato K."/>
            <person name="Tanikawa M."/>
            <person name="Yamazaki M."/>
            <person name="Ninomiya K."/>
            <person name="Ishibashi T."/>
            <person name="Yamashita H."/>
            <person name="Murakawa K."/>
            <person name="Fujimori K."/>
            <person name="Tanai H."/>
            <person name="Kimata M."/>
            <person name="Watanabe M."/>
            <person name="Hiraoka S."/>
            <person name="Chiba Y."/>
            <person name="Ishida S."/>
            <person name="Ono Y."/>
            <person name="Takiguchi S."/>
            <person name="Watanabe S."/>
            <person name="Yosida M."/>
            <person name="Hotuta T."/>
            <person name="Kusano J."/>
            <person name="Kanehori K."/>
            <person name="Takahashi-Fujii A."/>
            <person name="Hara H."/>
            <person name="Tanase T.-O."/>
            <person name="Nomura Y."/>
            <person name="Togiya S."/>
            <person name="Komai F."/>
            <person name="Hara R."/>
            <person name="Takeuchi K."/>
            <person name="Arita M."/>
            <person name="Imose N."/>
            <person name="Musashino K."/>
            <person name="Yuuki H."/>
            <person name="Oshima A."/>
            <person name="Sasaki N."/>
            <person name="Aotsuka S."/>
            <person name="Yoshikawa Y."/>
            <person name="Matsunawa H."/>
            <person name="Ichihara T."/>
            <person name="Shiohata N."/>
            <person name="Sano S."/>
            <person name="Moriya S."/>
            <person name="Momiyama H."/>
            <person name="Satoh N."/>
            <person name="Takami S."/>
            <person name="Terashima Y."/>
            <person name="Suzuki O."/>
            <person name="Nakagawa S."/>
            <person name="Senoh A."/>
            <person name="Mizoguchi H."/>
            <person name="Goto Y."/>
            <person name="Shimizu F."/>
            <person name="Wakebe H."/>
            <person name="Hishigaki H."/>
            <person name="Watanabe T."/>
            <person name="Sugiyama A."/>
            <person name="Takemoto M."/>
            <person name="Kawakami B."/>
            <person name="Yamazaki M."/>
            <person name="Watanabe K."/>
            <person name="Kumagai A."/>
            <person name="Itakura S."/>
            <person name="Fukuzumi Y."/>
            <person name="Fujimori Y."/>
            <person name="Komiyama M."/>
            <person name="Tashiro H."/>
            <person name="Tanigami A."/>
            <person name="Fujiwara T."/>
            <person name="Ono T."/>
            <person name="Yamada K."/>
            <person name="Fujii Y."/>
            <person name="Ozaki K."/>
            <person name="Hirao M."/>
            <person name="Ohmori Y."/>
            <person name="Kawabata A."/>
            <person name="Hikiji T."/>
            <person name="Kobatake N."/>
            <person name="Inagaki H."/>
            <person name="Ikema Y."/>
            <person name="Okamoto S."/>
            <person name="Okitani R."/>
            <person name="Kawakami T."/>
            <person name="Noguchi S."/>
            <person name="Itoh T."/>
            <person name="Shigeta K."/>
            <person name="Senba T."/>
            <person name="Matsumura K."/>
            <person name="Nakajima Y."/>
            <person name="Mizuno T."/>
            <person name="Morinaga M."/>
            <person name="Sasaki M."/>
            <person name="Togashi T."/>
            <person name="Oyama M."/>
            <person name="Hata H."/>
            <person name="Watanabe M."/>
            <person name="Komatsu T."/>
            <person name="Mizushima-Sugano J."/>
            <person name="Satoh T."/>
            <person name="Shirai Y."/>
            <person name="Takahashi Y."/>
            <person name="Nakagawa K."/>
            <person name="Okumura K."/>
            <person name="Nagase T."/>
            <person name="Nomura N."/>
            <person name="Kikuchi H."/>
            <person name="Masuho Y."/>
            <person name="Yamashita R."/>
            <person name="Nakai K."/>
            <person name="Yada T."/>
            <person name="Nakamura Y."/>
            <person name="Ohara O."/>
            <person name="Isogai T."/>
            <person name="Sugano S."/>
        </authorList>
    </citation>
    <scope>NUCLEOTIDE SEQUENCE [LARGE SCALE MRNA] (ISOFORMS 3 AND 4)</scope>
    <scope>VARIANT LYS-531</scope>
    <source>
        <tissue>Heart</tissue>
        <tissue>Tongue</tissue>
    </source>
</reference>
<reference key="8">
    <citation type="journal article" date="1999" name="Nature">
        <title>The DNA sequence of human chromosome 22.</title>
        <authorList>
            <person name="Dunham I."/>
            <person name="Hunt A.R."/>
            <person name="Collins J.E."/>
            <person name="Bruskiewich R."/>
            <person name="Beare D.M."/>
            <person name="Clamp M."/>
            <person name="Smink L.J."/>
            <person name="Ainscough R."/>
            <person name="Almeida J.P."/>
            <person name="Babbage A.K."/>
            <person name="Bagguley C."/>
            <person name="Bailey J."/>
            <person name="Barlow K.F."/>
            <person name="Bates K.N."/>
            <person name="Beasley O.P."/>
            <person name="Bird C.P."/>
            <person name="Blakey S.E."/>
            <person name="Bridgeman A.M."/>
            <person name="Buck D."/>
            <person name="Burgess J."/>
            <person name="Burrill W.D."/>
            <person name="Burton J."/>
            <person name="Carder C."/>
            <person name="Carter N.P."/>
            <person name="Chen Y."/>
            <person name="Clark G."/>
            <person name="Clegg S.M."/>
            <person name="Cobley V.E."/>
            <person name="Cole C.G."/>
            <person name="Collier R.E."/>
            <person name="Connor R."/>
            <person name="Conroy D."/>
            <person name="Corby N.R."/>
            <person name="Coville G.J."/>
            <person name="Cox A.V."/>
            <person name="Davis J."/>
            <person name="Dawson E."/>
            <person name="Dhami P.D."/>
            <person name="Dockree C."/>
            <person name="Dodsworth S.J."/>
            <person name="Durbin R.M."/>
            <person name="Ellington A.G."/>
            <person name="Evans K.L."/>
            <person name="Fey J.M."/>
            <person name="Fleming K."/>
            <person name="French L."/>
            <person name="Garner A.A."/>
            <person name="Gilbert J.G.R."/>
            <person name="Goward M.E."/>
            <person name="Grafham D.V."/>
            <person name="Griffiths M.N.D."/>
            <person name="Hall C."/>
            <person name="Hall R.E."/>
            <person name="Hall-Tamlyn G."/>
            <person name="Heathcott R.W."/>
            <person name="Ho S."/>
            <person name="Holmes S."/>
            <person name="Hunt S.E."/>
            <person name="Jones M.C."/>
            <person name="Kershaw J."/>
            <person name="Kimberley A.M."/>
            <person name="King A."/>
            <person name="Laird G.K."/>
            <person name="Langford C.F."/>
            <person name="Leversha M.A."/>
            <person name="Lloyd C."/>
            <person name="Lloyd D.M."/>
            <person name="Martyn I.D."/>
            <person name="Mashreghi-Mohammadi M."/>
            <person name="Matthews L.H."/>
            <person name="Mccann O.T."/>
            <person name="Mcclay J."/>
            <person name="Mclaren S."/>
            <person name="McMurray A.A."/>
            <person name="Milne S.A."/>
            <person name="Mortimore B.J."/>
            <person name="Odell C.N."/>
            <person name="Pavitt R."/>
            <person name="Pearce A.V."/>
            <person name="Pearson D."/>
            <person name="Phillimore B.J.C.T."/>
            <person name="Phillips S.H."/>
            <person name="Plumb R.W."/>
            <person name="Ramsay H."/>
            <person name="Ramsey Y."/>
            <person name="Rogers L."/>
            <person name="Ross M.T."/>
            <person name="Scott C.E."/>
            <person name="Sehra H.K."/>
            <person name="Skuce C.D."/>
            <person name="Smalley S."/>
            <person name="Smith M.L."/>
            <person name="Soderlund C."/>
            <person name="Spragon L."/>
            <person name="Steward C.A."/>
            <person name="Sulston J.E."/>
            <person name="Swann R.M."/>
            <person name="Vaudin M."/>
            <person name="Wall M."/>
            <person name="Wallis J.M."/>
            <person name="Whiteley M.N."/>
            <person name="Willey D.L."/>
            <person name="Williams L."/>
            <person name="Williams S.A."/>
            <person name="Williamson H."/>
            <person name="Wilmer T.E."/>
            <person name="Wilming L."/>
            <person name="Wright C.L."/>
            <person name="Hubbard T."/>
            <person name="Bentley D.R."/>
            <person name="Beck S."/>
            <person name="Rogers J."/>
            <person name="Shimizu N."/>
            <person name="Minoshima S."/>
            <person name="Kawasaki K."/>
            <person name="Sasaki T."/>
            <person name="Asakawa S."/>
            <person name="Kudoh J."/>
            <person name="Shintani A."/>
            <person name="Shibuya K."/>
            <person name="Yoshizaki Y."/>
            <person name="Aoki N."/>
            <person name="Mitsuyama S."/>
            <person name="Roe B.A."/>
            <person name="Chen F."/>
            <person name="Chu L."/>
            <person name="Crabtree J."/>
            <person name="Deschamps S."/>
            <person name="Do A."/>
            <person name="Do T."/>
            <person name="Dorman A."/>
            <person name="Fang F."/>
            <person name="Fu Y."/>
            <person name="Hu P."/>
            <person name="Hua A."/>
            <person name="Kenton S."/>
            <person name="Lai H."/>
            <person name="Lao H.I."/>
            <person name="Lewis J."/>
            <person name="Lewis S."/>
            <person name="Lin S.-P."/>
            <person name="Loh P."/>
            <person name="Malaj E."/>
            <person name="Nguyen T."/>
            <person name="Pan H."/>
            <person name="Phan S."/>
            <person name="Qi S."/>
            <person name="Qian Y."/>
            <person name="Ray L."/>
            <person name="Ren Q."/>
            <person name="Shaull S."/>
            <person name="Sloan D."/>
            <person name="Song L."/>
            <person name="Wang Q."/>
            <person name="Wang Y."/>
            <person name="Wang Z."/>
            <person name="White J."/>
            <person name="Willingham D."/>
            <person name="Wu H."/>
            <person name="Yao Z."/>
            <person name="Zhan M."/>
            <person name="Zhang G."/>
            <person name="Chissoe S."/>
            <person name="Murray J."/>
            <person name="Miller N."/>
            <person name="Minx P."/>
            <person name="Fulton R."/>
            <person name="Johnson D."/>
            <person name="Bemis G."/>
            <person name="Bentley D."/>
            <person name="Bradshaw H."/>
            <person name="Bourne S."/>
            <person name="Cordes M."/>
            <person name="Du Z."/>
            <person name="Fulton L."/>
            <person name="Goela D."/>
            <person name="Graves T."/>
            <person name="Hawkins J."/>
            <person name="Hinds K."/>
            <person name="Kemp K."/>
            <person name="Latreille P."/>
            <person name="Layman D."/>
            <person name="Ozersky P."/>
            <person name="Rohlfing T."/>
            <person name="Scheet P."/>
            <person name="Walker C."/>
            <person name="Wamsley A."/>
            <person name="Wohldmann P."/>
            <person name="Pepin K."/>
            <person name="Nelson J."/>
            <person name="Korf I."/>
            <person name="Bedell J.A."/>
            <person name="Hillier L.W."/>
            <person name="Mardis E."/>
            <person name="Waterston R."/>
            <person name="Wilson R."/>
            <person name="Emanuel B.S."/>
            <person name="Shaikh T."/>
            <person name="Kurahashi H."/>
            <person name="Saitta S."/>
            <person name="Budarf M.L."/>
            <person name="McDermid H.E."/>
            <person name="Johnson A."/>
            <person name="Wong A.C.C."/>
            <person name="Morrow B.E."/>
            <person name="Edelmann L."/>
            <person name="Kim U.J."/>
            <person name="Shizuya H."/>
            <person name="Simon M.I."/>
            <person name="Dumanski J.P."/>
            <person name="Peyrard M."/>
            <person name="Kedra D."/>
            <person name="Seroussi E."/>
            <person name="Fransson I."/>
            <person name="Tapia I."/>
            <person name="Bruder C.E."/>
            <person name="O'Brien K.P."/>
            <person name="Wilkinson P."/>
            <person name="Bodenteich A."/>
            <person name="Hartman K."/>
            <person name="Hu X."/>
            <person name="Khan A.S."/>
            <person name="Lane L."/>
            <person name="Tilahun Y."/>
            <person name="Wright H."/>
        </authorList>
    </citation>
    <scope>NUCLEOTIDE SEQUENCE [LARGE SCALE GENOMIC DNA]</scope>
</reference>
<organism>
    <name type="scientific">Homo sapiens</name>
    <name type="common">Human</name>
    <dbReference type="NCBI Taxonomy" id="9606"/>
    <lineage>
        <taxon>Eukaryota</taxon>
        <taxon>Metazoa</taxon>
        <taxon>Chordata</taxon>
        <taxon>Craniata</taxon>
        <taxon>Vertebrata</taxon>
        <taxon>Euteleostomi</taxon>
        <taxon>Mammalia</taxon>
        <taxon>Eutheria</taxon>
        <taxon>Euarchontoglires</taxon>
        <taxon>Primates</taxon>
        <taxon>Haplorrhini</taxon>
        <taxon>Catarrhini</taxon>
        <taxon>Hominidae</taxon>
        <taxon>Homo</taxon>
    </lineage>
</organism>
<gene>
    <name type="primary">CPT1B</name>
    <name type="synonym">KIAA1670</name>
</gene>
<comment type="function">
    <text evidence="2">Catalyzes the transfer of the acyl group of long-chain fatty acid-CoA conjugates onto carnitine, an essential step for the mitochondrial uptake of long-chain fatty acids and their subsequent beta-oxidation in the mitochondrion.</text>
</comment>
<comment type="catalytic activity">
    <reaction evidence="6">
        <text>(R)-carnitine + hexadecanoyl-CoA = O-hexadecanoyl-(R)-carnitine + CoA</text>
        <dbReference type="Rhea" id="RHEA:12661"/>
        <dbReference type="ChEBI" id="CHEBI:16347"/>
        <dbReference type="ChEBI" id="CHEBI:17490"/>
        <dbReference type="ChEBI" id="CHEBI:57287"/>
        <dbReference type="ChEBI" id="CHEBI:57379"/>
        <dbReference type="EC" id="2.3.1.21"/>
    </reaction>
    <physiologicalReaction direction="left-to-right" evidence="10">
        <dbReference type="Rhea" id="RHEA:12662"/>
    </physiologicalReaction>
</comment>
<comment type="biophysicochemical properties">
    <kinetics>
        <KM evidence="6">666 uM for carnitine</KM>
        <KM evidence="6">42 uM for palmitoyl-CoA</KM>
        <Vmax evidence="6">1.3 nmol/min/mg enzyme toward carnitine</Vmax>
        <Vmax evidence="6">1.44 nmol/min/mg enzyme toward palmitoyl-CoA</Vmax>
    </kinetics>
</comment>
<comment type="pathway">
    <text>Lipid metabolism; fatty acid beta-oxidation.</text>
</comment>
<comment type="interaction">
    <interactant intactId="EBI-10278486">
        <id>Q92523</id>
    </interactant>
    <interactant intactId="EBI-17231387">
        <id>Q6ZVE7</id>
        <label>GOLT1A</label>
    </interactant>
    <organismsDiffer>false</organismsDiffer>
    <experiments>3</experiments>
</comment>
<comment type="interaction">
    <interactant intactId="EBI-10278486">
        <id>Q92523</id>
    </interactant>
    <interactant intactId="EBI-10278496">
        <id>Q53QW1</id>
        <label>TEX44</label>
    </interactant>
    <organismsDiffer>false</organismsDiffer>
    <experiments>6</experiments>
</comment>
<comment type="subcellular location">
    <subcellularLocation>
        <location evidence="10">Mitochondrion outer membrane</location>
        <topology evidence="3">Multi-pass membrane protein</topology>
    </subcellularLocation>
</comment>
<comment type="alternative products">
    <event type="alternative splicing"/>
    <isoform>
        <id>Q92523-1</id>
        <name>1</name>
        <sequence type="displayed"/>
    </isoform>
    <isoform>
        <id>Q92523-2</id>
        <name>2</name>
        <sequence type="described" ref="VSP_034246 VSP_034247"/>
    </isoform>
    <isoform>
        <id>Q92523-3</id>
        <name>3</name>
        <sequence type="described" ref="VSP_043184"/>
    </isoform>
    <isoform>
        <id>Q92523-4</id>
        <name>4</name>
        <sequence type="described" ref="VSP_044451"/>
    </isoform>
</comment>
<comment type="tissue specificity">
    <text>Strong expression in heart and skeletal muscle. No expression in liver and kidney.</text>
</comment>
<comment type="miscellaneous">
    <text>This protein is produced by a bicistronic gene which also produces the CHKB protein from a non-overlapping reading frame.</text>
</comment>
<comment type="similarity">
    <text evidence="9">Belongs to the carnitine/choline acetyltransferase family.</text>
</comment>
<comment type="sequence caution" evidence="9">
    <conflict type="erroneous initiation">
        <sequence resource="EMBL-CDS" id="BAB33340"/>
    </conflict>
    <text>Extended N-terminus.</text>
</comment>
<sequence>MAEAHQAVAFQFTVTPDGVDFRLSREALKHVYLSGINSWKKRLIRIKNGILRGVYPGSPTSWLVVIMATVGSSFCNVDISLGLVSCIQRCLPQGCGPYQTPQTRALLSMAIFSTGVWVTGIFFFRQTLKLLLCYHGWMFEMHGKTSNLTRIWAMCIRLLSSRHPMLYSFQTSLPKLPVPRVSATIQRYLESVRPLLDDEEYYRMELLAKEFQDKTAPRLQKYLVLKSWWASNYVSDWWEEYIYLRGRSPLMVNSNYYVMDLVLIKNTDVQAARLGNIIHAMIMYRRKLDREEIKPVMALGIVPMCSYQMERMFNTTRIPGKDTDVLQHLSDSRHVAVYHKGRFFKLWLYEGARLLKPQDLEMQFQRILDDPSPPQPGEEKLAALTAGGRVEWAQARQAFFSSGKNKAALEAIERAAFFVALDEESYSYDPEDEASLSLYGKALLHGNCYNRWFDKSFTLISFKNGQLGLNAEHAWADAPIIGHLWEFVLGTDSFHLGYTETGHCLGKPNPALAPPTRLQWDIPKQCQAVIESSYQVAKALADDVELYCFQFLPFGKGLIKKCRTSPDAFVQIALQLAHFRDRGKFCLTYEASMTRMFREGRTETVRSCTSESTAFVQAMMEGSHTKADLRDLFQKAAKKHQNMYRLAMTGAGIDRHLFCLYLVSKYLGVSSPFLAEVLSEPWRLSTSQIPQSQIRMFDPEQHPNHLGAGGGFGPVADDGYGVSYMIAGENTIFFHISSKFSSSETNAQRFGNHIRKALLDIADLFQVPKAYS</sequence>
<proteinExistence type="evidence at protein level"/>
<feature type="chain" id="PRO_0000210162" description="Carnitine O-palmitoyltransferase 1, muscle isoform">
    <location>
        <begin position="1"/>
        <end position="772"/>
    </location>
</feature>
<feature type="topological domain" description="Cytoplasmic" evidence="3">
    <location>
        <begin position="1"/>
        <end position="47"/>
    </location>
</feature>
<feature type="transmembrane region" description="Helical" evidence="3">
    <location>
        <begin position="48"/>
        <end position="73"/>
    </location>
</feature>
<feature type="topological domain" description="Mitochondrial intermembrane" evidence="3">
    <location>
        <begin position="74"/>
        <end position="102"/>
    </location>
</feature>
<feature type="transmembrane region" description="Helical" evidence="3">
    <location>
        <begin position="103"/>
        <end position="122"/>
    </location>
</feature>
<feature type="topological domain" description="Cytoplasmic" evidence="3">
    <location>
        <begin position="123"/>
        <end position="772"/>
    </location>
</feature>
<feature type="active site" description="Proton acceptor" evidence="1">
    <location>
        <position position="473"/>
    </location>
</feature>
<feature type="binding site" evidence="1">
    <location>
        <begin position="555"/>
        <end position="567"/>
    </location>
    <ligand>
        <name>CoA</name>
        <dbReference type="ChEBI" id="CHEBI:57287"/>
    </ligand>
</feature>
<feature type="binding site" evidence="1">
    <location>
        <position position="589"/>
    </location>
    <ligand>
        <name>(R)-carnitine</name>
        <dbReference type="ChEBI" id="CHEBI:16347"/>
    </ligand>
</feature>
<feature type="binding site" evidence="1">
    <location>
        <position position="602"/>
    </location>
    <ligand>
        <name>(R)-carnitine</name>
        <dbReference type="ChEBI" id="CHEBI:16347"/>
    </ligand>
</feature>
<feature type="splice variant" id="VSP_043184" description="In isoform 3." evidence="8">
    <location>
        <begin position="154"/>
        <end position="187"/>
    </location>
</feature>
<feature type="splice variant" id="VSP_044451" description="In isoform 4." evidence="8">
    <location>
        <begin position="355"/>
        <end position="435"/>
    </location>
</feature>
<feature type="splice variant" id="VSP_034246" description="In isoform 2." evidence="7">
    <original>D</original>
    <variation>G</variation>
    <location>
        <position position="581"/>
    </location>
</feature>
<feature type="splice variant" id="VSP_034247" description="In isoform 2." evidence="7">
    <location>
        <begin position="582"/>
        <end position="772"/>
    </location>
</feature>
<feature type="sequence variant" id="VAR_020029" description="In dbSNP:rs3213445.">
    <original>I</original>
    <variation>V</variation>
    <location>
        <position position="66"/>
    </location>
</feature>
<feature type="sequence variant" id="VAR_021854" description="In dbSNP:rs2269383.">
    <original>G</original>
    <variation>D</variation>
    <location>
        <position position="320"/>
    </location>
</feature>
<feature type="sequence variant" id="VAR_024188" description="In dbSNP:rs8142477.">
    <original>S</original>
    <variation>C</variation>
    <location>
        <position position="427"/>
    </location>
</feature>
<feature type="sequence variant" id="VAR_011739" description="In dbSNP:rs470117." evidence="4 5">
    <original>E</original>
    <variation>K</variation>
    <location>
        <position position="531"/>
    </location>
</feature>
<feature type="sequence variant" id="VAR_011740" description="In dbSNP:rs1804702.">
    <original>S</original>
    <variation>Y</variation>
    <location>
        <position position="664"/>
    </location>
</feature>
<feature type="sequence conflict" description="In Ref. 7; BAH13024." evidence="9" ref="7">
    <original>C</original>
    <variation>S</variation>
    <location>
        <position position="75"/>
    </location>
</feature>
<protein>
    <recommendedName>
        <fullName>Carnitine O-palmitoyltransferase 1, muscle isoform</fullName>
        <shortName>CPT1-M</shortName>
        <ecNumber evidence="6">2.3.1.21</ecNumber>
    </recommendedName>
    <alternativeName>
        <fullName>Carnitine O-palmitoyltransferase I, muscle isoform</fullName>
        <shortName>CPT I</shortName>
        <shortName>CPTI-M</shortName>
    </alternativeName>
    <alternativeName>
        <fullName>Carnitine palmitoyltransferase 1B</fullName>
    </alternativeName>
    <alternativeName>
        <fullName>Carnitine palmitoyltransferase I-like protein</fullName>
    </alternativeName>
</protein>